<comment type="function">
    <text evidence="1">DNA-dependent RNA polymerase catalyzes the transcription of DNA into RNA using the four ribonucleoside triphosphates as substrates.</text>
</comment>
<comment type="catalytic activity">
    <reaction evidence="1">
        <text>RNA(n) + a ribonucleoside 5'-triphosphate = RNA(n+1) + diphosphate</text>
        <dbReference type="Rhea" id="RHEA:21248"/>
        <dbReference type="Rhea" id="RHEA-COMP:14527"/>
        <dbReference type="Rhea" id="RHEA-COMP:17342"/>
        <dbReference type="ChEBI" id="CHEBI:33019"/>
        <dbReference type="ChEBI" id="CHEBI:61557"/>
        <dbReference type="ChEBI" id="CHEBI:140395"/>
        <dbReference type="EC" id="2.7.7.6"/>
    </reaction>
</comment>
<comment type="cofactor">
    <cofactor evidence="1">
        <name>Mg(2+)</name>
        <dbReference type="ChEBI" id="CHEBI:18420"/>
    </cofactor>
    <text evidence="1">Binds 1 Mg(2+) ion per subunit.</text>
</comment>
<comment type="cofactor">
    <cofactor evidence="1">
        <name>Zn(2+)</name>
        <dbReference type="ChEBI" id="CHEBI:29105"/>
    </cofactor>
    <text evidence="1">Binds 2 Zn(2+) ions per subunit.</text>
</comment>
<comment type="subunit">
    <text evidence="1">The RNAP catalytic core consists of 2 alpha, 1 beta, 1 beta' and 1 omega subunit. When a sigma factor is associated with the core the holoenzyme is formed, which can initiate transcription.</text>
</comment>
<comment type="similarity">
    <text evidence="1">Belongs to the RNA polymerase beta' chain family.</text>
</comment>
<keyword id="KW-0240">DNA-directed RNA polymerase</keyword>
<keyword id="KW-0460">Magnesium</keyword>
<keyword id="KW-0479">Metal-binding</keyword>
<keyword id="KW-0548">Nucleotidyltransferase</keyword>
<keyword id="KW-0804">Transcription</keyword>
<keyword id="KW-0808">Transferase</keyword>
<keyword id="KW-0862">Zinc</keyword>
<protein>
    <recommendedName>
        <fullName evidence="1">DNA-directed RNA polymerase subunit beta'</fullName>
        <shortName evidence="1">RNAP subunit beta'</shortName>
        <ecNumber evidence="1">2.7.7.6</ecNumber>
    </recommendedName>
    <alternativeName>
        <fullName evidence="1">RNA polymerase subunit beta'</fullName>
    </alternativeName>
    <alternativeName>
        <fullName evidence="1">Transcriptase subunit beta'</fullName>
    </alternativeName>
</protein>
<evidence type="ECO:0000255" key="1">
    <source>
        <dbReference type="HAMAP-Rule" id="MF_01322"/>
    </source>
</evidence>
<reference key="1">
    <citation type="journal article" date="2005" name="J. Bacteriol.">
        <title>Whole-genome sequencing of Staphylococcus haemolyticus uncovers the extreme plasticity of its genome and the evolution of human-colonizing staphylococcal species.</title>
        <authorList>
            <person name="Takeuchi F."/>
            <person name="Watanabe S."/>
            <person name="Baba T."/>
            <person name="Yuzawa H."/>
            <person name="Ito T."/>
            <person name="Morimoto Y."/>
            <person name="Kuroda M."/>
            <person name="Cui L."/>
            <person name="Takahashi M."/>
            <person name="Ankai A."/>
            <person name="Baba S."/>
            <person name="Fukui S."/>
            <person name="Lee J.C."/>
            <person name="Hiramatsu K."/>
        </authorList>
    </citation>
    <scope>NUCLEOTIDE SEQUENCE [LARGE SCALE GENOMIC DNA]</scope>
    <source>
        <strain>JCSC1435</strain>
    </source>
</reference>
<name>RPOC_STAHJ</name>
<accession>Q4L3K4</accession>
<gene>
    <name evidence="1" type="primary">rpoC</name>
    <name type="ordered locus">SH2464</name>
</gene>
<feature type="chain" id="PRO_0000067801" description="DNA-directed RNA polymerase subunit beta'">
    <location>
        <begin position="1"/>
        <end position="1206"/>
    </location>
</feature>
<feature type="binding site" evidence="1">
    <location>
        <position position="60"/>
    </location>
    <ligand>
        <name>Zn(2+)</name>
        <dbReference type="ChEBI" id="CHEBI:29105"/>
        <label>1</label>
    </ligand>
</feature>
<feature type="binding site" evidence="1">
    <location>
        <position position="62"/>
    </location>
    <ligand>
        <name>Zn(2+)</name>
        <dbReference type="ChEBI" id="CHEBI:29105"/>
        <label>1</label>
    </ligand>
</feature>
<feature type="binding site" evidence="1">
    <location>
        <position position="75"/>
    </location>
    <ligand>
        <name>Zn(2+)</name>
        <dbReference type="ChEBI" id="CHEBI:29105"/>
        <label>1</label>
    </ligand>
</feature>
<feature type="binding site" evidence="1">
    <location>
        <position position="78"/>
    </location>
    <ligand>
        <name>Zn(2+)</name>
        <dbReference type="ChEBI" id="CHEBI:29105"/>
        <label>1</label>
    </ligand>
</feature>
<feature type="binding site" evidence="1">
    <location>
        <position position="449"/>
    </location>
    <ligand>
        <name>Mg(2+)</name>
        <dbReference type="ChEBI" id="CHEBI:18420"/>
    </ligand>
</feature>
<feature type="binding site" evidence="1">
    <location>
        <position position="451"/>
    </location>
    <ligand>
        <name>Mg(2+)</name>
        <dbReference type="ChEBI" id="CHEBI:18420"/>
    </ligand>
</feature>
<feature type="binding site" evidence="1">
    <location>
        <position position="453"/>
    </location>
    <ligand>
        <name>Mg(2+)</name>
        <dbReference type="ChEBI" id="CHEBI:18420"/>
    </ligand>
</feature>
<feature type="binding site" evidence="1">
    <location>
        <position position="822"/>
    </location>
    <ligand>
        <name>Zn(2+)</name>
        <dbReference type="ChEBI" id="CHEBI:29105"/>
        <label>2</label>
    </ligand>
</feature>
<feature type="binding site" evidence="1">
    <location>
        <position position="896"/>
    </location>
    <ligand>
        <name>Zn(2+)</name>
        <dbReference type="ChEBI" id="CHEBI:29105"/>
        <label>2</label>
    </ligand>
</feature>
<feature type="binding site" evidence="1">
    <location>
        <position position="903"/>
    </location>
    <ligand>
        <name>Zn(2+)</name>
        <dbReference type="ChEBI" id="CHEBI:29105"/>
        <label>2</label>
    </ligand>
</feature>
<feature type="binding site" evidence="1">
    <location>
        <position position="906"/>
    </location>
    <ligand>
        <name>Zn(2+)</name>
        <dbReference type="ChEBI" id="CHEBI:29105"/>
        <label>2</label>
    </ligand>
</feature>
<dbReference type="EC" id="2.7.7.6" evidence="1"/>
<dbReference type="EMBL" id="AP006716">
    <property type="protein sequence ID" value="BAE05773.1"/>
    <property type="molecule type" value="Genomic_DNA"/>
</dbReference>
<dbReference type="SMR" id="Q4L3K4"/>
<dbReference type="KEGG" id="sha:SH2464"/>
<dbReference type="eggNOG" id="COG0086">
    <property type="taxonomic scope" value="Bacteria"/>
</dbReference>
<dbReference type="HOGENOM" id="CLU_000524_3_1_9"/>
<dbReference type="OrthoDB" id="9815296at2"/>
<dbReference type="Proteomes" id="UP000000543">
    <property type="component" value="Chromosome"/>
</dbReference>
<dbReference type="GO" id="GO:0000428">
    <property type="term" value="C:DNA-directed RNA polymerase complex"/>
    <property type="evidence" value="ECO:0007669"/>
    <property type="project" value="UniProtKB-KW"/>
</dbReference>
<dbReference type="GO" id="GO:0003677">
    <property type="term" value="F:DNA binding"/>
    <property type="evidence" value="ECO:0007669"/>
    <property type="project" value="UniProtKB-UniRule"/>
</dbReference>
<dbReference type="GO" id="GO:0003899">
    <property type="term" value="F:DNA-directed RNA polymerase activity"/>
    <property type="evidence" value="ECO:0007669"/>
    <property type="project" value="UniProtKB-UniRule"/>
</dbReference>
<dbReference type="GO" id="GO:0000287">
    <property type="term" value="F:magnesium ion binding"/>
    <property type="evidence" value="ECO:0007669"/>
    <property type="project" value="UniProtKB-UniRule"/>
</dbReference>
<dbReference type="GO" id="GO:0008270">
    <property type="term" value="F:zinc ion binding"/>
    <property type="evidence" value="ECO:0007669"/>
    <property type="project" value="UniProtKB-UniRule"/>
</dbReference>
<dbReference type="GO" id="GO:0006351">
    <property type="term" value="P:DNA-templated transcription"/>
    <property type="evidence" value="ECO:0007669"/>
    <property type="project" value="UniProtKB-UniRule"/>
</dbReference>
<dbReference type="CDD" id="cd02655">
    <property type="entry name" value="RNAP_beta'_C"/>
    <property type="match status" value="1"/>
</dbReference>
<dbReference type="CDD" id="cd01609">
    <property type="entry name" value="RNAP_beta'_N"/>
    <property type="match status" value="1"/>
</dbReference>
<dbReference type="FunFam" id="1.10.132.30:FF:000003">
    <property type="entry name" value="DNA-directed RNA polymerase subunit beta"/>
    <property type="match status" value="1"/>
</dbReference>
<dbReference type="FunFam" id="1.10.150.390:FF:000002">
    <property type="entry name" value="DNA-directed RNA polymerase subunit beta"/>
    <property type="match status" value="1"/>
</dbReference>
<dbReference type="FunFam" id="4.10.860.120:FF:000001">
    <property type="entry name" value="DNA-directed RNA polymerase subunit beta"/>
    <property type="match status" value="1"/>
</dbReference>
<dbReference type="Gene3D" id="1.10.132.30">
    <property type="match status" value="1"/>
</dbReference>
<dbReference type="Gene3D" id="1.10.150.390">
    <property type="match status" value="1"/>
</dbReference>
<dbReference type="Gene3D" id="1.10.1790.20">
    <property type="match status" value="1"/>
</dbReference>
<dbReference type="Gene3D" id="1.10.40.90">
    <property type="match status" value="1"/>
</dbReference>
<dbReference type="Gene3D" id="2.40.40.20">
    <property type="match status" value="1"/>
</dbReference>
<dbReference type="Gene3D" id="2.40.50.100">
    <property type="match status" value="1"/>
</dbReference>
<dbReference type="Gene3D" id="4.10.860.120">
    <property type="entry name" value="RNA polymerase II, clamp domain"/>
    <property type="match status" value="1"/>
</dbReference>
<dbReference type="Gene3D" id="1.10.274.100">
    <property type="entry name" value="RNA polymerase Rpb1, domain 3"/>
    <property type="match status" value="1"/>
</dbReference>
<dbReference type="HAMAP" id="MF_01322">
    <property type="entry name" value="RNApol_bact_RpoC"/>
    <property type="match status" value="1"/>
</dbReference>
<dbReference type="InterPro" id="IPR045867">
    <property type="entry name" value="DNA-dir_RpoC_beta_prime"/>
</dbReference>
<dbReference type="InterPro" id="IPR012754">
    <property type="entry name" value="DNA-dir_RpoC_beta_prime_bact"/>
</dbReference>
<dbReference type="InterPro" id="IPR000722">
    <property type="entry name" value="RNA_pol_asu"/>
</dbReference>
<dbReference type="InterPro" id="IPR006592">
    <property type="entry name" value="RNA_pol_N"/>
</dbReference>
<dbReference type="InterPro" id="IPR007080">
    <property type="entry name" value="RNA_pol_Rpb1_1"/>
</dbReference>
<dbReference type="InterPro" id="IPR007066">
    <property type="entry name" value="RNA_pol_Rpb1_3"/>
</dbReference>
<dbReference type="InterPro" id="IPR042102">
    <property type="entry name" value="RNA_pol_Rpb1_3_sf"/>
</dbReference>
<dbReference type="InterPro" id="IPR007083">
    <property type="entry name" value="RNA_pol_Rpb1_4"/>
</dbReference>
<dbReference type="InterPro" id="IPR007081">
    <property type="entry name" value="RNA_pol_Rpb1_5"/>
</dbReference>
<dbReference type="InterPro" id="IPR044893">
    <property type="entry name" value="RNA_pol_Rpb1_clamp_domain"/>
</dbReference>
<dbReference type="InterPro" id="IPR038120">
    <property type="entry name" value="Rpb1_funnel_sf"/>
</dbReference>
<dbReference type="NCBIfam" id="TIGR02386">
    <property type="entry name" value="rpoC_TIGR"/>
    <property type="match status" value="1"/>
</dbReference>
<dbReference type="PANTHER" id="PTHR19376">
    <property type="entry name" value="DNA-DIRECTED RNA POLYMERASE"/>
    <property type="match status" value="1"/>
</dbReference>
<dbReference type="PANTHER" id="PTHR19376:SF54">
    <property type="entry name" value="DNA-DIRECTED RNA POLYMERASE SUBUNIT BETA"/>
    <property type="match status" value="1"/>
</dbReference>
<dbReference type="Pfam" id="PF04997">
    <property type="entry name" value="RNA_pol_Rpb1_1"/>
    <property type="match status" value="1"/>
</dbReference>
<dbReference type="Pfam" id="PF00623">
    <property type="entry name" value="RNA_pol_Rpb1_2"/>
    <property type="match status" value="1"/>
</dbReference>
<dbReference type="Pfam" id="PF04983">
    <property type="entry name" value="RNA_pol_Rpb1_3"/>
    <property type="match status" value="1"/>
</dbReference>
<dbReference type="Pfam" id="PF05000">
    <property type="entry name" value="RNA_pol_Rpb1_4"/>
    <property type="match status" value="1"/>
</dbReference>
<dbReference type="Pfam" id="PF04998">
    <property type="entry name" value="RNA_pol_Rpb1_5"/>
    <property type="match status" value="1"/>
</dbReference>
<dbReference type="SMART" id="SM00663">
    <property type="entry name" value="RPOLA_N"/>
    <property type="match status" value="1"/>
</dbReference>
<dbReference type="SUPFAM" id="SSF64484">
    <property type="entry name" value="beta and beta-prime subunits of DNA dependent RNA-polymerase"/>
    <property type="match status" value="1"/>
</dbReference>
<proteinExistence type="inferred from homology"/>
<organism>
    <name type="scientific">Staphylococcus haemolyticus (strain JCSC1435)</name>
    <dbReference type="NCBI Taxonomy" id="279808"/>
    <lineage>
        <taxon>Bacteria</taxon>
        <taxon>Bacillati</taxon>
        <taxon>Bacillota</taxon>
        <taxon>Bacilli</taxon>
        <taxon>Bacillales</taxon>
        <taxon>Staphylococcaceae</taxon>
        <taxon>Staphylococcus</taxon>
    </lineage>
</organism>
<sequence>MIDVNNFHYMKIGLASPEKIRSWSYGEVKKPETINYRTLKPEKDGLFCERIFGPTKDWECSCGKYKRVRYKGMVCDRCGVEVTKSKVRRERMGHIELAAPVSHIWYFKGIPSRMGLLLDMSPRALEEVIYFASYVVVDPGPTGLEKKSLLSEAEFREYYDKYPGQFVAKMGAEGIKDLLEEINLDEELKSLRDELESATGQRLTRAIKRLEVVESFRNSGNNPAWMILDVLPIIPPEIRPMVQLDGGRFATSDLNDLYRRVINRNNRLKRLLDLGAPGIIVQNEKRMLQEAVDALIDNGRRGRPVTGPGNRPLKSLSHMLKGKQGRFRQNLLGKRVDYSGRSVIAVGPSLKMYQCGLPKEMALELFKPFVMKELVQREIATNIKNAKSKIERMDDEVWDVLEDVIREHPVLLNRAPTLHRLGIQAFEPTLVEGRAIRLHPLVTTAYNADFDGDQMAVHVPLSKEAQAEARMLMLAAQNILNPKDGKPVVTPSQDMVLGNYYLTLERKDAMNTGTIFNDTNEVLKAYANGYVHLHTRIGVHAKSFNNPTFTEAQNNKILATSVGKVIFNEIIPDSFAFINEPSQTNLEGKTPDKYFIDSTQLGEGGLKAYFEEQELIEPFNKKFLGNIIAEVFNRFSITDTSMMLDRMKDLGFKFSSKAGITVGVADIVVLPDKQDILDEHEKLVERVSKQFNRGLITEDERYNAVVEIWTDAKDQIQGELMQSLEKTNPIFMMSDSGARGNASNFTQLAGMRGLMAAPSGKIIELPITSSFREGLTVLEYFISTHGARKGLADTALKTADSGYLTRRLVDVAQDVIVREEDCGTDRGLLVSDIKEGTEMIEPFIERIEGRYSKETIRHPETDEIIIRPDELITAEIAKKITDAGIEQMYIRSAFTCNTRHGVCEKCYGKNLATGEKVEVGEAVGTIAAQSIGEPGTQLTMRTFHTGGVAGSDITQGLPRIQEIFEARNPKGQAVITEIEGVVEDIKLAKDRQQEIVVKGANETRSYLASGTSRLKVEVGQSVERGEVLTEGSIEPKNFLAVAGLNATESYLLKEVQKVYRMQGVEIDDKHVEVMVRQMLRKVRIIEAGDTKLLPGSLVDIHSFTDANREAFKERKRPATAKPVLLGITKASLETESFLSAASFQETTRVLTDAAIKGKRDDLLGLKENVIIGKLIPAGTGMRRYSDVKYDKAETPVTETEEAEIIE</sequence>